<dbReference type="PIR" id="S08191">
    <property type="entry name" value="S08191"/>
</dbReference>
<dbReference type="RefSeq" id="XP_064885010.1">
    <property type="nucleotide sequence ID" value="XM_065028938.1"/>
</dbReference>
<dbReference type="SMR" id="P15787"/>
<dbReference type="GeneID" id="135575360"/>
<dbReference type="GO" id="GO:0005737">
    <property type="term" value="C:cytoplasm"/>
    <property type="evidence" value="ECO:0007669"/>
    <property type="project" value="TreeGrafter"/>
</dbReference>
<dbReference type="GO" id="GO:0005634">
    <property type="term" value="C:nucleus"/>
    <property type="evidence" value="ECO:0007669"/>
    <property type="project" value="TreeGrafter"/>
</dbReference>
<dbReference type="GO" id="GO:0008270">
    <property type="term" value="F:zinc ion binding"/>
    <property type="evidence" value="ECO:0000250"/>
    <property type="project" value="AgBase"/>
</dbReference>
<dbReference type="GO" id="GO:0071276">
    <property type="term" value="P:cellular response to cadmium ion"/>
    <property type="evidence" value="ECO:0007669"/>
    <property type="project" value="TreeGrafter"/>
</dbReference>
<dbReference type="GO" id="GO:0071280">
    <property type="term" value="P:cellular response to copper ion"/>
    <property type="evidence" value="ECO:0007669"/>
    <property type="project" value="TreeGrafter"/>
</dbReference>
<dbReference type="GO" id="GO:0071294">
    <property type="term" value="P:cellular response to zinc ion"/>
    <property type="evidence" value="ECO:0007669"/>
    <property type="project" value="TreeGrafter"/>
</dbReference>
<dbReference type="GO" id="GO:0010273">
    <property type="term" value="P:detoxification of copper ion"/>
    <property type="evidence" value="ECO:0007669"/>
    <property type="project" value="TreeGrafter"/>
</dbReference>
<dbReference type="GO" id="GO:0006882">
    <property type="term" value="P:intracellular zinc ion homeostasis"/>
    <property type="evidence" value="ECO:0007669"/>
    <property type="project" value="TreeGrafter"/>
</dbReference>
<dbReference type="GO" id="GO:0032496">
    <property type="term" value="P:response to lipopolysaccharide"/>
    <property type="evidence" value="ECO:0000250"/>
    <property type="project" value="AgBase"/>
</dbReference>
<dbReference type="FunFam" id="4.10.10.10:FF:000001">
    <property type="entry name" value="Metallothionein"/>
    <property type="match status" value="1"/>
</dbReference>
<dbReference type="Gene3D" id="4.10.10.10">
    <property type="entry name" value="Metallothionein Isoform II"/>
    <property type="match status" value="1"/>
</dbReference>
<dbReference type="InterPro" id="IPR017854">
    <property type="entry name" value="Metalthion_dom_sf"/>
</dbReference>
<dbReference type="InterPro" id="IPR023587">
    <property type="entry name" value="Metalthion_dom_sf_vert"/>
</dbReference>
<dbReference type="InterPro" id="IPR000006">
    <property type="entry name" value="Metalthion_vert"/>
</dbReference>
<dbReference type="InterPro" id="IPR018064">
    <property type="entry name" value="Metalthion_vert_metal_BS"/>
</dbReference>
<dbReference type="PANTHER" id="PTHR23299">
    <property type="entry name" value="METALLOTHIONEIN"/>
    <property type="match status" value="1"/>
</dbReference>
<dbReference type="PANTHER" id="PTHR23299:SF24">
    <property type="entry name" value="METALLOTHIONEIN-1X"/>
    <property type="match status" value="1"/>
</dbReference>
<dbReference type="Pfam" id="PF00131">
    <property type="entry name" value="Metallothio"/>
    <property type="match status" value="1"/>
</dbReference>
<dbReference type="PRINTS" id="PR00860">
    <property type="entry name" value="MTVERTEBRATE"/>
</dbReference>
<dbReference type="SUPFAM" id="SSF57868">
    <property type="entry name" value="Metallothionein"/>
    <property type="match status" value="1"/>
</dbReference>
<dbReference type="PROSITE" id="PS00203">
    <property type="entry name" value="METALLOTHIONEIN_VRT"/>
    <property type="match status" value="1"/>
</dbReference>
<organism>
    <name type="scientific">Columba livia</name>
    <name type="common">Rock dove</name>
    <dbReference type="NCBI Taxonomy" id="8932"/>
    <lineage>
        <taxon>Eukaryota</taxon>
        <taxon>Metazoa</taxon>
        <taxon>Chordata</taxon>
        <taxon>Craniata</taxon>
        <taxon>Vertebrata</taxon>
        <taxon>Euteleostomi</taxon>
        <taxon>Archelosauria</taxon>
        <taxon>Archosauria</taxon>
        <taxon>Dinosauria</taxon>
        <taxon>Saurischia</taxon>
        <taxon>Theropoda</taxon>
        <taxon>Coelurosauria</taxon>
        <taxon>Aves</taxon>
        <taxon>Neognathae</taxon>
        <taxon>Neoaves</taxon>
        <taxon>Columbimorphae</taxon>
        <taxon>Columbiformes</taxon>
        <taxon>Columbidae</taxon>
        <taxon>Columba</taxon>
    </lineage>
</organism>
<accession>P15787</accession>
<name>MT2_COLLI</name>
<proteinExistence type="evidence at protein level"/>
<keyword id="KW-0903">Direct protein sequencing</keyword>
<keyword id="KW-0479">Metal-binding</keyword>
<keyword id="KW-0480">Metal-thiolate cluster</keyword>
<protein>
    <recommendedName>
        <fullName>Metallothionein-2</fullName>
        <shortName>MT-2</shortName>
    </recommendedName>
    <alternativeName>
        <fullName>Metallothionein-II</fullName>
        <shortName>MT-II</shortName>
    </alternativeName>
</protein>
<comment type="function">
    <text>Metallothioneins have a high content of cysteine residues that bind various heavy metals.</text>
</comment>
<comment type="domain">
    <text>Class I metallothioneins contain 2 metal-binding domains: four divalent ions are chelated within cluster A of the alpha domain and are coordinated via cysteinyl thiolate bridges to 11 cysteine ligands. Cluster B, the corresponding region within the beta domain, can ligate three divalent ions to 9 cysteines.</text>
</comment>
<comment type="similarity">
    <text evidence="2">Belongs to the metallothionein superfamily. Type 1 family.</text>
</comment>
<feature type="chain" id="PRO_0000197262" description="Metallothionein-2">
    <location>
        <begin position="1"/>
        <end position="63"/>
    </location>
</feature>
<feature type="region of interest" description="Beta">
    <location>
        <begin position="1"/>
        <end position="30"/>
    </location>
</feature>
<feature type="region of interest" description="Alpha">
    <location>
        <begin position="31"/>
        <end position="63"/>
    </location>
</feature>
<feature type="binding site" evidence="1">
    <location>
        <position position="6"/>
    </location>
    <ligand>
        <name>a divalent metal cation</name>
        <dbReference type="ChEBI" id="CHEBI:60240"/>
        <label>1</label>
        <note>in cluster B</note>
    </ligand>
</feature>
<feature type="binding site" evidence="1">
    <location>
        <position position="8"/>
    </location>
    <ligand>
        <name>a divalent metal cation</name>
        <dbReference type="ChEBI" id="CHEBI:60240"/>
        <label>1</label>
        <note>in cluster B</note>
    </ligand>
</feature>
<feature type="binding site" evidence="1">
    <location>
        <position position="8"/>
    </location>
    <ligand>
        <name>a divalent metal cation</name>
        <dbReference type="ChEBI" id="CHEBI:60240"/>
        <label>2</label>
        <note>in cluster B</note>
    </ligand>
</feature>
<feature type="binding site" evidence="1">
    <location>
        <position position="14"/>
    </location>
    <ligand>
        <name>a divalent metal cation</name>
        <dbReference type="ChEBI" id="CHEBI:60240"/>
        <label>2</label>
        <note>in cluster B</note>
    </ligand>
</feature>
<feature type="binding site" evidence="1">
    <location>
        <position position="16"/>
    </location>
    <ligand>
        <name>a divalent metal cation</name>
        <dbReference type="ChEBI" id="CHEBI:60240"/>
        <label>2</label>
        <note>in cluster B</note>
    </ligand>
</feature>
<feature type="binding site" evidence="1">
    <location>
        <position position="16"/>
    </location>
    <ligand>
        <name>a divalent metal cation</name>
        <dbReference type="ChEBI" id="CHEBI:60240"/>
        <label>3</label>
        <note>in cluster B</note>
    </ligand>
</feature>
<feature type="binding site" evidence="1">
    <location>
        <position position="20"/>
    </location>
    <ligand>
        <name>a divalent metal cation</name>
        <dbReference type="ChEBI" id="CHEBI:60240"/>
        <label>3</label>
        <note>in cluster B</note>
    </ligand>
</feature>
<feature type="binding site" evidence="1">
    <location>
        <position position="22"/>
    </location>
    <ligand>
        <name>a divalent metal cation</name>
        <dbReference type="ChEBI" id="CHEBI:60240"/>
        <label>1</label>
        <note>in cluster B</note>
    </ligand>
</feature>
<feature type="binding site" evidence="1">
    <location>
        <position position="25"/>
    </location>
    <ligand>
        <name>a divalent metal cation</name>
        <dbReference type="ChEBI" id="CHEBI:60240"/>
        <label>1</label>
        <note>in cluster B</note>
    </ligand>
</feature>
<feature type="binding site" evidence="1">
    <location>
        <position position="25"/>
    </location>
    <ligand>
        <name>a divalent metal cation</name>
        <dbReference type="ChEBI" id="CHEBI:60240"/>
        <label>3</label>
        <note>in cluster B</note>
    </ligand>
</feature>
<feature type="binding site" evidence="1">
    <location>
        <position position="27"/>
    </location>
    <ligand>
        <name>a divalent metal cation</name>
        <dbReference type="ChEBI" id="CHEBI:60240"/>
        <label>2</label>
        <note>in cluster B</note>
    </ligand>
</feature>
<feature type="binding site" evidence="1">
    <location>
        <position position="30"/>
    </location>
    <ligand>
        <name>a divalent metal cation</name>
        <dbReference type="ChEBI" id="CHEBI:60240"/>
        <label>3</label>
        <note>in cluster B</note>
    </ligand>
</feature>
<feature type="binding site" evidence="1">
    <location>
        <position position="34"/>
    </location>
    <ligand>
        <name>a divalent metal cation</name>
        <dbReference type="ChEBI" id="CHEBI:60240"/>
        <label>4</label>
        <note>in cluster A</note>
    </ligand>
</feature>
<feature type="binding site" evidence="1">
    <location>
        <position position="35"/>
    </location>
    <ligand>
        <name>a divalent metal cation</name>
        <dbReference type="ChEBI" id="CHEBI:60240"/>
        <label>4</label>
        <note>in cluster A</note>
    </ligand>
</feature>
<feature type="binding site" evidence="1">
    <location>
        <position position="35"/>
    </location>
    <ligand>
        <name>a divalent metal cation</name>
        <dbReference type="ChEBI" id="CHEBI:60240"/>
        <label>5</label>
        <note>in cluster A</note>
    </ligand>
</feature>
<feature type="binding site" evidence="1">
    <location>
        <position position="37"/>
    </location>
    <ligand>
        <name>a divalent metal cation</name>
        <dbReference type="ChEBI" id="CHEBI:60240"/>
        <label>5</label>
        <note>in cluster A</note>
    </ligand>
</feature>
<feature type="binding site" evidence="1">
    <location>
        <position position="38"/>
    </location>
    <ligand>
        <name>a divalent metal cation</name>
        <dbReference type="ChEBI" id="CHEBI:60240"/>
        <label>5</label>
        <note>in cluster A</note>
    </ligand>
</feature>
<feature type="binding site" evidence="1">
    <location>
        <position position="38"/>
    </location>
    <ligand>
        <name>a divalent metal cation</name>
        <dbReference type="ChEBI" id="CHEBI:60240"/>
        <label>6</label>
        <note>in cluster A</note>
    </ligand>
</feature>
<feature type="binding site" evidence="1">
    <location>
        <position position="42"/>
    </location>
    <ligand>
        <name>a divalent metal cation</name>
        <dbReference type="ChEBI" id="CHEBI:60240"/>
        <label>6</label>
        <note>in cluster A</note>
    </ligand>
</feature>
<feature type="binding site" evidence="1">
    <location>
        <position position="45"/>
    </location>
    <ligand>
        <name>a divalent metal cation</name>
        <dbReference type="ChEBI" id="CHEBI:60240"/>
        <label>4</label>
        <note>in cluster A</note>
    </ligand>
</feature>
<feature type="binding site" evidence="1">
    <location>
        <position position="45"/>
    </location>
    <ligand>
        <name>a divalent metal cation</name>
        <dbReference type="ChEBI" id="CHEBI:60240"/>
        <label>6</label>
        <note>in cluster A</note>
    </ligand>
</feature>
<feature type="binding site" evidence="1">
    <location>
        <position position="49"/>
    </location>
    <ligand>
        <name>a divalent metal cation</name>
        <dbReference type="ChEBI" id="CHEBI:60240"/>
        <label>4</label>
        <note>in cluster A</note>
    </ligand>
</feature>
<feature type="binding site" evidence="1">
    <location>
        <position position="51"/>
    </location>
    <ligand>
        <name>a divalent metal cation</name>
        <dbReference type="ChEBI" id="CHEBI:60240"/>
        <label>5</label>
        <note>in cluster A</note>
    </ligand>
</feature>
<feature type="binding site" evidence="1">
    <location>
        <position position="51"/>
    </location>
    <ligand>
        <name>a divalent metal cation</name>
        <dbReference type="ChEBI" id="CHEBI:60240"/>
        <label>7</label>
        <note>in cluster A</note>
    </ligand>
</feature>
<feature type="binding site" evidence="1">
    <location>
        <position position="59"/>
    </location>
    <ligand>
        <name>a divalent metal cation</name>
        <dbReference type="ChEBI" id="CHEBI:60240"/>
        <label>7</label>
        <note>in cluster A</note>
    </ligand>
</feature>
<feature type="binding site" evidence="1">
    <location>
        <position position="61"/>
    </location>
    <ligand>
        <name>a divalent metal cation</name>
        <dbReference type="ChEBI" id="CHEBI:60240"/>
        <label>7</label>
        <note>in cluster A</note>
    </ligand>
</feature>
<feature type="binding site" evidence="1">
    <location>
        <position position="62"/>
    </location>
    <ligand>
        <name>a divalent metal cation</name>
        <dbReference type="ChEBI" id="CHEBI:60240"/>
        <label>6</label>
        <note>in cluster A</note>
    </ligand>
</feature>
<feature type="binding site" evidence="1">
    <location>
        <position position="62"/>
    </location>
    <ligand>
        <name>a divalent metal cation</name>
        <dbReference type="ChEBI" id="CHEBI:60240"/>
        <label>7</label>
        <note>in cluster A</note>
    </ligand>
</feature>
<sequence length="63" mass="6452">MDPQDCTCAAGDSCSCAGSCKCKNCRCQSCRKSCCSCCPASCSNCAKGCVCKEPSSSKCSCCH</sequence>
<reference key="1">
    <citation type="journal article" date="1990" name="Biochim. Biophys. Acta">
        <title>Pigeon metallothionein consists of two species.</title>
        <authorList>
            <person name="Lin L.-Y."/>
            <person name="Lin W.C."/>
            <person name="Huang P.C."/>
        </authorList>
    </citation>
    <scope>PROTEIN SEQUENCE</scope>
    <source>
        <tissue>Liver</tissue>
    </source>
</reference>
<evidence type="ECO:0000250" key="1">
    <source>
        <dbReference type="UniProtKB" id="P02795"/>
    </source>
</evidence>
<evidence type="ECO:0000305" key="2"/>